<name>TGT_PROM5</name>
<feature type="chain" id="PRO_1000016824" description="Queuine tRNA-ribosyltransferase">
    <location>
        <begin position="1"/>
        <end position="372"/>
    </location>
</feature>
<feature type="region of interest" description="RNA binding" evidence="1">
    <location>
        <begin position="246"/>
        <end position="252"/>
    </location>
</feature>
<feature type="region of interest" description="RNA binding; important for wobble base 34 recognition" evidence="1">
    <location>
        <begin position="270"/>
        <end position="274"/>
    </location>
</feature>
<feature type="active site" description="Proton acceptor" evidence="1">
    <location>
        <position position="92"/>
    </location>
</feature>
<feature type="active site" description="Nucleophile" evidence="1">
    <location>
        <position position="265"/>
    </location>
</feature>
<feature type="binding site" evidence="1">
    <location>
        <begin position="92"/>
        <end position="96"/>
    </location>
    <ligand>
        <name>substrate</name>
    </ligand>
</feature>
<feature type="binding site" evidence="1">
    <location>
        <position position="146"/>
    </location>
    <ligand>
        <name>substrate</name>
    </ligand>
</feature>
<feature type="binding site" evidence="1">
    <location>
        <position position="188"/>
    </location>
    <ligand>
        <name>substrate</name>
    </ligand>
</feature>
<feature type="binding site" evidence="1">
    <location>
        <position position="215"/>
    </location>
    <ligand>
        <name>substrate</name>
    </ligand>
</feature>
<feature type="binding site" evidence="1">
    <location>
        <position position="303"/>
    </location>
    <ligand>
        <name>Zn(2+)</name>
        <dbReference type="ChEBI" id="CHEBI:29105"/>
    </ligand>
</feature>
<feature type="binding site" evidence="1">
    <location>
        <position position="305"/>
    </location>
    <ligand>
        <name>Zn(2+)</name>
        <dbReference type="ChEBI" id="CHEBI:29105"/>
    </ligand>
</feature>
<feature type="binding site" evidence="1">
    <location>
        <position position="308"/>
    </location>
    <ligand>
        <name>Zn(2+)</name>
        <dbReference type="ChEBI" id="CHEBI:29105"/>
    </ligand>
</feature>
<feature type="binding site" evidence="1">
    <location>
        <position position="334"/>
    </location>
    <ligand>
        <name>Zn(2+)</name>
        <dbReference type="ChEBI" id="CHEBI:29105"/>
    </ligand>
</feature>
<sequence>MFNFEVISSCSNTEARTGIFHTPHGQVRTPRFMPVGTLATVKGISSQQLKSTGSEMILSNTFHLHLQPGEKLIKEAGGIHEFMNWDKPVLTDSGGYQVFSLAKLNNITNEGVEFKNPRDGSPVFLSPDKVMRIQMDLGSDIAMAFDHCPPHTATENDIQDSLNRTHLWLENCVETHKKSNQALFGIVQGGRYPKLREISAKFTSSFGLPGIAVGGVSVGESVEQIHNVINFVPKFLPKDKPRYLMGIGSLKEITLAIAKGFDLFDCVLPTRLGRHGTAFFNDERWNIRNARFKNDFSPIDKTCKCETCKSYSRAYLHHLVRNDEILGLTLISLHNIAHLLRFTNAISAAIKDNCFTIDFAPWKRSSIAHHTW</sequence>
<proteinExistence type="inferred from homology"/>
<reference key="1">
    <citation type="journal article" date="2007" name="PLoS Genet.">
        <title>Patterns and implications of gene gain and loss in the evolution of Prochlorococcus.</title>
        <authorList>
            <person name="Kettler G.C."/>
            <person name="Martiny A.C."/>
            <person name="Huang K."/>
            <person name="Zucker J."/>
            <person name="Coleman M.L."/>
            <person name="Rodrigue S."/>
            <person name="Chen F."/>
            <person name="Lapidus A."/>
            <person name="Ferriera S."/>
            <person name="Johnson J."/>
            <person name="Steglich C."/>
            <person name="Church G.M."/>
            <person name="Richardson P."/>
            <person name="Chisholm S.W."/>
        </authorList>
    </citation>
    <scope>NUCLEOTIDE SEQUENCE [LARGE SCALE GENOMIC DNA]</scope>
    <source>
        <strain>MIT 9515</strain>
    </source>
</reference>
<evidence type="ECO:0000255" key="1">
    <source>
        <dbReference type="HAMAP-Rule" id="MF_00168"/>
    </source>
</evidence>
<organism>
    <name type="scientific">Prochlorococcus marinus (strain MIT 9515)</name>
    <dbReference type="NCBI Taxonomy" id="167542"/>
    <lineage>
        <taxon>Bacteria</taxon>
        <taxon>Bacillati</taxon>
        <taxon>Cyanobacteriota</taxon>
        <taxon>Cyanophyceae</taxon>
        <taxon>Synechococcales</taxon>
        <taxon>Prochlorococcaceae</taxon>
        <taxon>Prochlorococcus</taxon>
    </lineage>
</organism>
<protein>
    <recommendedName>
        <fullName evidence="1">Queuine tRNA-ribosyltransferase</fullName>
        <ecNumber evidence="1">2.4.2.29</ecNumber>
    </recommendedName>
    <alternativeName>
        <fullName evidence="1">Guanine insertion enzyme</fullName>
    </alternativeName>
    <alternativeName>
        <fullName evidence="1">tRNA-guanine transglycosylase</fullName>
    </alternativeName>
</protein>
<comment type="function">
    <text evidence="1">Catalyzes the base-exchange of a guanine (G) residue with the queuine precursor 7-aminomethyl-7-deazaguanine (PreQ1) at position 34 (anticodon wobble position) in tRNAs with GU(N) anticodons (tRNA-Asp, -Asn, -His and -Tyr). Catalysis occurs through a double-displacement mechanism. The nucleophile active site attacks the C1' of nucleotide 34 to detach the guanine base from the RNA, forming a covalent enzyme-RNA intermediate. The proton acceptor active site deprotonates the incoming PreQ1, allowing a nucleophilic attack on the C1' of the ribose to form the product. After dissociation, two additional enzymatic reactions on the tRNA convert PreQ1 to queuine (Q), resulting in the hypermodified nucleoside queuosine (7-(((4,5-cis-dihydroxy-2-cyclopenten-1-yl)amino)methyl)-7-deazaguanosine).</text>
</comment>
<comment type="catalytic activity">
    <reaction evidence="1">
        <text>7-aminomethyl-7-carbaguanine + guanosine(34) in tRNA = 7-aminomethyl-7-carbaguanosine(34) in tRNA + guanine</text>
        <dbReference type="Rhea" id="RHEA:24104"/>
        <dbReference type="Rhea" id="RHEA-COMP:10341"/>
        <dbReference type="Rhea" id="RHEA-COMP:10342"/>
        <dbReference type="ChEBI" id="CHEBI:16235"/>
        <dbReference type="ChEBI" id="CHEBI:58703"/>
        <dbReference type="ChEBI" id="CHEBI:74269"/>
        <dbReference type="ChEBI" id="CHEBI:82833"/>
        <dbReference type="EC" id="2.4.2.29"/>
    </reaction>
</comment>
<comment type="cofactor">
    <cofactor evidence="1">
        <name>Zn(2+)</name>
        <dbReference type="ChEBI" id="CHEBI:29105"/>
    </cofactor>
    <text evidence="1">Binds 1 zinc ion per subunit.</text>
</comment>
<comment type="pathway">
    <text evidence="1">tRNA modification; tRNA-queuosine biosynthesis.</text>
</comment>
<comment type="subunit">
    <text evidence="1">Homodimer. Within each dimer, one monomer is responsible for RNA recognition and catalysis, while the other monomer binds to the replacement base PreQ1.</text>
</comment>
<comment type="similarity">
    <text evidence="1">Belongs to the queuine tRNA-ribosyltransferase family.</text>
</comment>
<dbReference type="EC" id="2.4.2.29" evidence="1"/>
<dbReference type="EMBL" id="CP000552">
    <property type="protein sequence ID" value="ABM71513.1"/>
    <property type="molecule type" value="Genomic_DNA"/>
</dbReference>
<dbReference type="RefSeq" id="WP_011819623.1">
    <property type="nucleotide sequence ID" value="NC_008817.1"/>
</dbReference>
<dbReference type="SMR" id="A2BUQ2"/>
<dbReference type="STRING" id="167542.P9515_03041"/>
<dbReference type="GeneID" id="60200423"/>
<dbReference type="KEGG" id="pmc:P9515_03041"/>
<dbReference type="eggNOG" id="COG0343">
    <property type="taxonomic scope" value="Bacteria"/>
</dbReference>
<dbReference type="HOGENOM" id="CLU_022060_0_1_3"/>
<dbReference type="OrthoDB" id="9805417at2"/>
<dbReference type="UniPathway" id="UPA00392"/>
<dbReference type="Proteomes" id="UP000001589">
    <property type="component" value="Chromosome"/>
</dbReference>
<dbReference type="GO" id="GO:0005829">
    <property type="term" value="C:cytosol"/>
    <property type="evidence" value="ECO:0007669"/>
    <property type="project" value="TreeGrafter"/>
</dbReference>
<dbReference type="GO" id="GO:0046872">
    <property type="term" value="F:metal ion binding"/>
    <property type="evidence" value="ECO:0007669"/>
    <property type="project" value="UniProtKB-KW"/>
</dbReference>
<dbReference type="GO" id="GO:0008479">
    <property type="term" value="F:tRNA-guanosine(34) queuine transglycosylase activity"/>
    <property type="evidence" value="ECO:0007669"/>
    <property type="project" value="UniProtKB-UniRule"/>
</dbReference>
<dbReference type="GO" id="GO:0008616">
    <property type="term" value="P:queuosine biosynthetic process"/>
    <property type="evidence" value="ECO:0007669"/>
    <property type="project" value="UniProtKB-UniRule"/>
</dbReference>
<dbReference type="GO" id="GO:0002099">
    <property type="term" value="P:tRNA wobble guanine modification"/>
    <property type="evidence" value="ECO:0007669"/>
    <property type="project" value="TreeGrafter"/>
</dbReference>
<dbReference type="GO" id="GO:0101030">
    <property type="term" value="P:tRNA-guanine transglycosylation"/>
    <property type="evidence" value="ECO:0007669"/>
    <property type="project" value="InterPro"/>
</dbReference>
<dbReference type="Gene3D" id="3.20.20.105">
    <property type="entry name" value="Queuine tRNA-ribosyltransferase-like"/>
    <property type="match status" value="1"/>
</dbReference>
<dbReference type="HAMAP" id="MF_00168">
    <property type="entry name" value="Q_tRNA_Tgt"/>
    <property type="match status" value="1"/>
</dbReference>
<dbReference type="InterPro" id="IPR050076">
    <property type="entry name" value="ArchSynthase1/Queuine_TRR"/>
</dbReference>
<dbReference type="InterPro" id="IPR004803">
    <property type="entry name" value="TGT"/>
</dbReference>
<dbReference type="InterPro" id="IPR036511">
    <property type="entry name" value="TGT-like_sf"/>
</dbReference>
<dbReference type="InterPro" id="IPR002616">
    <property type="entry name" value="tRNA_ribo_trans-like"/>
</dbReference>
<dbReference type="NCBIfam" id="TIGR00430">
    <property type="entry name" value="Q_tRNA_tgt"/>
    <property type="match status" value="1"/>
</dbReference>
<dbReference type="NCBIfam" id="TIGR00449">
    <property type="entry name" value="tgt_general"/>
    <property type="match status" value="1"/>
</dbReference>
<dbReference type="PANTHER" id="PTHR46499">
    <property type="entry name" value="QUEUINE TRNA-RIBOSYLTRANSFERASE"/>
    <property type="match status" value="1"/>
</dbReference>
<dbReference type="PANTHER" id="PTHR46499:SF1">
    <property type="entry name" value="QUEUINE TRNA-RIBOSYLTRANSFERASE"/>
    <property type="match status" value="1"/>
</dbReference>
<dbReference type="Pfam" id="PF01702">
    <property type="entry name" value="TGT"/>
    <property type="match status" value="1"/>
</dbReference>
<dbReference type="SUPFAM" id="SSF51713">
    <property type="entry name" value="tRNA-guanine transglycosylase"/>
    <property type="match status" value="1"/>
</dbReference>
<accession>A2BUQ2</accession>
<gene>
    <name evidence="1" type="primary">tgt</name>
    <name type="ordered locus">P9515_03041</name>
</gene>
<keyword id="KW-0328">Glycosyltransferase</keyword>
<keyword id="KW-0479">Metal-binding</keyword>
<keyword id="KW-0671">Queuosine biosynthesis</keyword>
<keyword id="KW-0808">Transferase</keyword>
<keyword id="KW-0819">tRNA processing</keyword>
<keyword id="KW-0862">Zinc</keyword>